<proteinExistence type="inferred from homology"/>
<name>PARD_YERPE</name>
<feature type="chain" id="PRO_0000216358" description="Antitoxin ParD">
    <location>
        <begin position="1"/>
        <end position="80"/>
    </location>
</feature>
<comment type="function">
    <text evidence="1">Antitoxin component of a type II toxin-antitoxin (TA) system. Neutralizes the effect of toxin ParE (By similarity).</text>
</comment>
<comment type="similarity">
    <text evidence="2">Belongs to the ParD antitoxin family.</text>
</comment>
<comment type="sequence caution" evidence="2">
    <conflict type="erroneous initiation">
        <sequence resource="EMBL-CDS" id="AAC69815"/>
    </conflict>
    <text>Extended N-terminus.</text>
</comment>
<comment type="sequence caution" evidence="2">
    <conflict type="erroneous initiation">
        <sequence resource="EMBL-CDS" id="AAS58589"/>
    </conflict>
    <text>Extended N-terminus.</text>
</comment>
<comment type="sequence caution" evidence="2">
    <conflict type="erroneous initiation">
        <sequence resource="EMBL-CDS" id="CAB54886"/>
    </conflict>
    <text>Extended N-terminus.</text>
</comment>
<geneLocation type="plasmid">
    <name>pCD1</name>
</geneLocation>
<reference key="1">
    <citation type="journal article" date="1998" name="Infect. Immun.">
        <title>DNA sequencing and analysis of the low-Ca2+-response plasmid pCD1 of Yersinia pestis KIM5.</title>
        <authorList>
            <person name="Perry R.D."/>
            <person name="Straley S.C."/>
            <person name="Fetherston J.D."/>
            <person name="Rose D.J."/>
            <person name="Gregor J."/>
            <person name="Blattner F.R."/>
        </authorList>
    </citation>
    <scope>NUCLEOTIDE SEQUENCE [GENOMIC DNA]</scope>
    <source>
        <strain>KIM5 / Biovar Mediaevalis</strain>
    </source>
</reference>
<reference key="2">
    <citation type="journal article" date="2001" name="Nature">
        <title>Genome sequence of Yersinia pestis, the causative agent of plague.</title>
        <authorList>
            <person name="Parkhill J."/>
            <person name="Wren B.W."/>
            <person name="Thomson N.R."/>
            <person name="Titball R.W."/>
            <person name="Holden M.T.G."/>
            <person name="Prentice M.B."/>
            <person name="Sebaihia M."/>
            <person name="James K.D."/>
            <person name="Churcher C.M."/>
            <person name="Mungall K.L."/>
            <person name="Baker S."/>
            <person name="Basham D."/>
            <person name="Bentley S.D."/>
            <person name="Brooks K."/>
            <person name="Cerdeno-Tarraga A.-M."/>
            <person name="Chillingworth T."/>
            <person name="Cronin A."/>
            <person name="Davies R.M."/>
            <person name="Davis P."/>
            <person name="Dougan G."/>
            <person name="Feltwell T."/>
            <person name="Hamlin N."/>
            <person name="Holroyd S."/>
            <person name="Jagels K."/>
            <person name="Karlyshev A.V."/>
            <person name="Leather S."/>
            <person name="Moule S."/>
            <person name="Oyston P.C.F."/>
            <person name="Quail M.A."/>
            <person name="Rutherford K.M."/>
            <person name="Simmonds M."/>
            <person name="Skelton J."/>
            <person name="Stevens K."/>
            <person name="Whitehead S."/>
            <person name="Barrell B.G."/>
        </authorList>
    </citation>
    <scope>NUCLEOTIDE SEQUENCE [LARGE SCALE GENOMIC DNA]</scope>
    <source>
        <strain>CO-92 / Biovar Orientalis</strain>
    </source>
</reference>
<reference key="3">
    <citation type="journal article" date="2004" name="DNA Res.">
        <title>Complete genome sequence of Yersinia pestis strain 91001, an isolate avirulent to humans.</title>
        <authorList>
            <person name="Song Y."/>
            <person name="Tong Z."/>
            <person name="Wang J."/>
            <person name="Wang L."/>
            <person name="Guo Z."/>
            <person name="Han Y."/>
            <person name="Zhang J."/>
            <person name="Pei D."/>
            <person name="Zhou D."/>
            <person name="Qin H."/>
            <person name="Pang X."/>
            <person name="Han Y."/>
            <person name="Zhai J."/>
            <person name="Li M."/>
            <person name="Cui B."/>
            <person name="Qi Z."/>
            <person name="Jin L."/>
            <person name="Dai R."/>
            <person name="Chen F."/>
            <person name="Li S."/>
            <person name="Ye C."/>
            <person name="Du Z."/>
            <person name="Lin W."/>
            <person name="Wang J."/>
            <person name="Yu J."/>
            <person name="Yang H."/>
            <person name="Wang J."/>
            <person name="Huang P."/>
            <person name="Yang R."/>
        </authorList>
    </citation>
    <scope>NUCLEOTIDE SEQUENCE [LARGE SCALE GENOMIC DNA]</scope>
    <source>
        <strain>91001 / Biovar Mediaevalis</strain>
    </source>
</reference>
<protein>
    <recommendedName>
        <fullName>Antitoxin ParD</fullName>
    </recommendedName>
</protein>
<organism>
    <name type="scientific">Yersinia pestis</name>
    <dbReference type="NCBI Taxonomy" id="632"/>
    <lineage>
        <taxon>Bacteria</taxon>
        <taxon>Pseudomonadati</taxon>
        <taxon>Pseudomonadota</taxon>
        <taxon>Gammaproteobacteria</taxon>
        <taxon>Enterobacterales</taxon>
        <taxon>Yersiniaceae</taxon>
        <taxon>Yersinia</taxon>
    </lineage>
</organism>
<evidence type="ECO:0000250" key="1"/>
<evidence type="ECO:0000305" key="2"/>
<dbReference type="EMBL" id="AF074612">
    <property type="protein sequence ID" value="AAC69815.1"/>
    <property type="status" value="ALT_INIT"/>
    <property type="molecule type" value="Genomic_DNA"/>
</dbReference>
<dbReference type="EMBL" id="AL117189">
    <property type="protein sequence ID" value="CAB54886.1"/>
    <property type="status" value="ALT_INIT"/>
    <property type="molecule type" value="Genomic_DNA"/>
</dbReference>
<dbReference type="EMBL" id="AE017043">
    <property type="protein sequence ID" value="AAS58589.1"/>
    <property type="status" value="ALT_INIT"/>
    <property type="molecule type" value="Genomic_DNA"/>
</dbReference>
<dbReference type="PIR" id="T42907">
    <property type="entry name" value="T42907"/>
</dbReference>
<dbReference type="RefSeq" id="NP_395146.2">
    <property type="nucleotide sequence ID" value="NC_003131.1"/>
</dbReference>
<dbReference type="RefSeq" id="NP_857964.3">
    <property type="nucleotide sequence ID" value="NC_004839.1"/>
</dbReference>
<dbReference type="RefSeq" id="WP_002224342.1">
    <property type="nucleotide sequence ID" value="NZ_WUCM01000133.1"/>
</dbReference>
<dbReference type="SMR" id="Q9ZGW3"/>
<dbReference type="PaxDb" id="214092-5832432"/>
<dbReference type="EnsemblBacteria" id="AAS58589">
    <property type="protein sequence ID" value="AAS58589"/>
    <property type="gene ID" value="YP_pCD78"/>
</dbReference>
<dbReference type="KEGG" id="ype:YPCD1.09c"/>
<dbReference type="KEGG" id="ypm:YP_pCD78"/>
<dbReference type="PATRIC" id="fig|214092.21.peg.10"/>
<dbReference type="eggNOG" id="COG3609">
    <property type="taxonomic scope" value="Bacteria"/>
</dbReference>
<dbReference type="HOGENOM" id="CLU_144805_2_1_6"/>
<dbReference type="OMA" id="RHADYAK"/>
<dbReference type="OrthoDB" id="9815501at2"/>
<dbReference type="PRO" id="PR:Q9ZGW3"/>
<dbReference type="Proteomes" id="UP000000815">
    <property type="component" value="Plasmid pCD1"/>
</dbReference>
<dbReference type="Proteomes" id="UP000001019">
    <property type="component" value="Plasmid pCD1"/>
</dbReference>
<dbReference type="GO" id="GO:0097351">
    <property type="term" value="F:toxin sequestering activity"/>
    <property type="evidence" value="ECO:0000318"/>
    <property type="project" value="GO_Central"/>
</dbReference>
<dbReference type="GO" id="GO:0098754">
    <property type="term" value="P:detoxification"/>
    <property type="evidence" value="ECO:0000318"/>
    <property type="project" value="GO_Central"/>
</dbReference>
<dbReference type="GO" id="GO:0006355">
    <property type="term" value="P:regulation of DNA-templated transcription"/>
    <property type="evidence" value="ECO:0007669"/>
    <property type="project" value="InterPro"/>
</dbReference>
<dbReference type="CDD" id="cd22231">
    <property type="entry name" value="RHH_NikR_HicB-like"/>
    <property type="match status" value="1"/>
</dbReference>
<dbReference type="Gene3D" id="6.10.10.120">
    <property type="entry name" value="Antitoxin ParD1-like"/>
    <property type="match status" value="1"/>
</dbReference>
<dbReference type="InterPro" id="IPR022789">
    <property type="entry name" value="ParD"/>
</dbReference>
<dbReference type="InterPro" id="IPR038296">
    <property type="entry name" value="ParD_sf"/>
</dbReference>
<dbReference type="InterPro" id="IPR010985">
    <property type="entry name" value="Ribbon_hlx_hlx"/>
</dbReference>
<dbReference type="NCBIfam" id="TIGR02606">
    <property type="entry name" value="antidote_CC2985"/>
    <property type="match status" value="1"/>
</dbReference>
<dbReference type="PANTHER" id="PTHR36582">
    <property type="entry name" value="ANTITOXIN PARD"/>
    <property type="match status" value="1"/>
</dbReference>
<dbReference type="PANTHER" id="PTHR36582:SF2">
    <property type="entry name" value="ANTITOXIN PARD"/>
    <property type="match status" value="1"/>
</dbReference>
<dbReference type="Pfam" id="PF03693">
    <property type="entry name" value="ParD_antitoxin"/>
    <property type="match status" value="1"/>
</dbReference>
<dbReference type="SUPFAM" id="SSF47598">
    <property type="entry name" value="Ribbon-helix-helix"/>
    <property type="match status" value="1"/>
</dbReference>
<gene>
    <name type="primary">parD</name>
    <name type="ordered locus">YPCD1.09c</name>
    <name type="ordered locus">y5065</name>
    <name type="ordered locus">y0074</name>
    <name type="ordered locus">YP_pCD78</name>
</gene>
<accession>Q9ZGW3</accession>
<keyword id="KW-0614">Plasmid</keyword>
<keyword id="KW-1185">Reference proteome</keyword>
<keyword id="KW-1277">Toxin-antitoxin system</keyword>
<sequence length="80" mass="8865">MAHVTSVTLGEHLTGFVGEMIQSGRYGNISEVLRDALRLMEAREQRVQHVRDMVLAGTNVPVSHRLMDEIFSAAVKDTSV</sequence>